<comment type="function">
    <text evidence="4">May function as a linker between membranes and the actin cytoskeleton.</text>
</comment>
<comment type="subcellular location">
    <subcellularLocation>
        <location evidence="4">Membrane</location>
        <topology evidence="4">Peripheral membrane protein</topology>
    </subcellularLocation>
    <subcellularLocation>
        <location evidence="4">Cytoplasm</location>
        <location evidence="4">Cytoskeleton</location>
    </subcellularLocation>
    <text>Associated with membranes and the cytoskeleton.</text>
</comment>
<comment type="developmental stage">
    <text evidence="4">Present in low amounts during growth and early aggregation, but increase during development and reach its highest level at the tipped mound stage (at protein level).</text>
</comment>
<name>VILD_DICDI</name>
<feature type="chain" id="PRO_0000051331" description="Villidin">
    <location>
        <begin position="1"/>
        <end position="1704"/>
    </location>
</feature>
<feature type="repeat" description="WD 1">
    <location>
        <begin position="82"/>
        <end position="122"/>
    </location>
</feature>
<feature type="repeat" description="WD 2">
    <location>
        <begin position="133"/>
        <end position="173"/>
    </location>
</feature>
<feature type="repeat" description="WD 3">
    <location>
        <begin position="180"/>
        <end position="221"/>
    </location>
</feature>
<feature type="repeat" description="WD 4">
    <location>
        <begin position="225"/>
        <end position="271"/>
    </location>
</feature>
<feature type="domain" description="PH 1" evidence="1">
    <location>
        <begin position="459"/>
        <end position="563"/>
    </location>
</feature>
<feature type="domain" description="PH 2" evidence="1">
    <location>
        <begin position="727"/>
        <end position="828"/>
    </location>
</feature>
<feature type="domain" description="PH 3" evidence="1">
    <location>
        <begin position="871"/>
        <end position="969"/>
    </location>
</feature>
<feature type="repeat" description="Gelsolin-like 1">
    <location>
        <begin position="1025"/>
        <end position="1119"/>
    </location>
</feature>
<feature type="repeat" description="Gelsolin-like 2">
    <location>
        <begin position="1138"/>
        <end position="1241"/>
    </location>
</feature>
<feature type="repeat" description="Gelsolin-like 3">
    <location>
        <begin position="1293"/>
        <end position="1390"/>
    </location>
</feature>
<feature type="repeat" description="Gelsolin-like 4">
    <location>
        <begin position="1404"/>
        <end position="1494"/>
    </location>
</feature>
<feature type="repeat" description="Gelsolin-like 5">
    <location>
        <begin position="1520"/>
        <end position="1615"/>
    </location>
</feature>
<feature type="domain" description="HP" evidence="2">
    <location>
        <begin position="1641"/>
        <end position="1704"/>
    </location>
</feature>
<feature type="region of interest" description="Disordered" evidence="3">
    <location>
        <begin position="439"/>
        <end position="460"/>
    </location>
</feature>
<feature type="region of interest" description="Disordered" evidence="3">
    <location>
        <begin position="606"/>
        <end position="721"/>
    </location>
</feature>
<feature type="region of interest" description="Disordered" evidence="3">
    <location>
        <begin position="848"/>
        <end position="877"/>
    </location>
</feature>
<feature type="compositionally biased region" description="Gly residues" evidence="3">
    <location>
        <begin position="442"/>
        <end position="456"/>
    </location>
</feature>
<feature type="compositionally biased region" description="Low complexity" evidence="3">
    <location>
        <begin position="613"/>
        <end position="636"/>
    </location>
</feature>
<feature type="compositionally biased region" description="Low complexity" evidence="3">
    <location>
        <begin position="651"/>
        <end position="701"/>
    </location>
</feature>
<feature type="compositionally biased region" description="Low complexity" evidence="3">
    <location>
        <begin position="709"/>
        <end position="721"/>
    </location>
</feature>
<feature type="compositionally biased region" description="Acidic residues" evidence="3">
    <location>
        <begin position="854"/>
        <end position="873"/>
    </location>
</feature>
<feature type="sequence conflict" description="In Ref. 1; CAD20809." evidence="5" ref="1">
    <original>I</original>
    <variation>F</variation>
    <location>
        <position position="6"/>
    </location>
</feature>
<feature type="sequence conflict" description="In Ref. 1; CAD20809." evidence="5" ref="1">
    <original>S</original>
    <variation>Y</variation>
    <location>
        <position position="389"/>
    </location>
</feature>
<feature type="sequence conflict" description="In Ref. 1; CAD20809." evidence="5" ref="1">
    <original>Q</original>
    <variation>P</variation>
    <location>
        <position position="500"/>
    </location>
</feature>
<feature type="sequence conflict" description="In Ref. 1; CAD20809." evidence="5" ref="1">
    <original>G</original>
    <variation>R</variation>
    <location>
        <position position="538"/>
    </location>
</feature>
<feature type="sequence conflict" description="In Ref. 1; CAD20809." evidence="5" ref="1">
    <original>H</original>
    <variation>L</variation>
    <location>
        <position position="541"/>
    </location>
</feature>
<feature type="sequence conflict" description="In Ref. 1; CAD20809." evidence="5" ref="1">
    <original>SIN</original>
    <variation>AIK</variation>
    <location>
        <begin position="557"/>
        <end position="559"/>
    </location>
</feature>
<reference key="1">
    <citation type="journal article" date="2003" name="Mol. Biol. Cell">
        <title>Villidin, a novel WD-repeat and villin-related protein from Dictyostelium, is associated with membranes and the cytoskeleton.</title>
        <authorList>
            <person name="Gloss A."/>
            <person name="Rivero F."/>
            <person name="Khaire N."/>
            <person name="Mueller R."/>
            <person name="Loomis W.F."/>
            <person name="Schleicher M."/>
            <person name="Noegel A.A."/>
        </authorList>
    </citation>
    <scope>NUCLEOTIDE SEQUENCE [GENOMIC DNA]</scope>
    <scope>FUNCTION</scope>
    <scope>SUBCELLULAR LOCATION</scope>
    <scope>DEVELOPMENTAL STAGE</scope>
    <source>
        <strain>AX2</strain>
    </source>
</reference>
<reference key="2">
    <citation type="journal article" date="2005" name="Nature">
        <title>The genome of the social amoeba Dictyostelium discoideum.</title>
        <authorList>
            <person name="Eichinger L."/>
            <person name="Pachebat J.A."/>
            <person name="Gloeckner G."/>
            <person name="Rajandream M.A."/>
            <person name="Sucgang R."/>
            <person name="Berriman M."/>
            <person name="Song J."/>
            <person name="Olsen R."/>
            <person name="Szafranski K."/>
            <person name="Xu Q."/>
            <person name="Tunggal B."/>
            <person name="Kummerfeld S."/>
            <person name="Madera M."/>
            <person name="Konfortov B.A."/>
            <person name="Rivero F."/>
            <person name="Bankier A.T."/>
            <person name="Lehmann R."/>
            <person name="Hamlin N."/>
            <person name="Davies R."/>
            <person name="Gaudet P."/>
            <person name="Fey P."/>
            <person name="Pilcher K."/>
            <person name="Chen G."/>
            <person name="Saunders D."/>
            <person name="Sodergren E.J."/>
            <person name="Davis P."/>
            <person name="Kerhornou A."/>
            <person name="Nie X."/>
            <person name="Hall N."/>
            <person name="Anjard C."/>
            <person name="Hemphill L."/>
            <person name="Bason N."/>
            <person name="Farbrother P."/>
            <person name="Desany B."/>
            <person name="Just E."/>
            <person name="Morio T."/>
            <person name="Rost R."/>
            <person name="Churcher C.M."/>
            <person name="Cooper J."/>
            <person name="Haydock S."/>
            <person name="van Driessche N."/>
            <person name="Cronin A."/>
            <person name="Goodhead I."/>
            <person name="Muzny D.M."/>
            <person name="Mourier T."/>
            <person name="Pain A."/>
            <person name="Lu M."/>
            <person name="Harper D."/>
            <person name="Lindsay R."/>
            <person name="Hauser H."/>
            <person name="James K.D."/>
            <person name="Quiles M."/>
            <person name="Madan Babu M."/>
            <person name="Saito T."/>
            <person name="Buchrieser C."/>
            <person name="Wardroper A."/>
            <person name="Felder M."/>
            <person name="Thangavelu M."/>
            <person name="Johnson D."/>
            <person name="Knights A."/>
            <person name="Loulseged H."/>
            <person name="Mungall K.L."/>
            <person name="Oliver K."/>
            <person name="Price C."/>
            <person name="Quail M.A."/>
            <person name="Urushihara H."/>
            <person name="Hernandez J."/>
            <person name="Rabbinowitsch E."/>
            <person name="Steffen D."/>
            <person name="Sanders M."/>
            <person name="Ma J."/>
            <person name="Kohara Y."/>
            <person name="Sharp S."/>
            <person name="Simmonds M.N."/>
            <person name="Spiegler S."/>
            <person name="Tivey A."/>
            <person name="Sugano S."/>
            <person name="White B."/>
            <person name="Walker D."/>
            <person name="Woodward J.R."/>
            <person name="Winckler T."/>
            <person name="Tanaka Y."/>
            <person name="Shaulsky G."/>
            <person name="Schleicher M."/>
            <person name="Weinstock G.M."/>
            <person name="Rosenthal A."/>
            <person name="Cox E.C."/>
            <person name="Chisholm R.L."/>
            <person name="Gibbs R.A."/>
            <person name="Loomis W.F."/>
            <person name="Platzer M."/>
            <person name="Kay R.R."/>
            <person name="Williams J.G."/>
            <person name="Dear P.H."/>
            <person name="Noegel A.A."/>
            <person name="Barrell B.G."/>
            <person name="Kuspa A."/>
        </authorList>
    </citation>
    <scope>NUCLEOTIDE SEQUENCE [LARGE SCALE GENOMIC DNA]</scope>
    <source>
        <strain>AX4</strain>
    </source>
</reference>
<reference key="3">
    <citation type="submission" date="1996-11" db="EMBL/GenBank/DDBJ databases">
        <authorList>
            <person name="Loomis W.F."/>
            <person name="Iranfar N."/>
        </authorList>
    </citation>
    <scope>NUCLEOTIDE SEQUENCE [MRNA] OF 1444-1704</scope>
    <source>
        <strain>AX4</strain>
    </source>
</reference>
<gene>
    <name type="primary">vilA</name>
    <name type="ORF">DDB_G0288557</name>
</gene>
<sequence>MEYKSIEKSIVRESKVRNVFSKVCKKELFYTNLKVNSASEELLKSSKSLFAYPSSIGGGSCLSITKLSNHGKVPDTPFCIKGHTDPISCFEFSNFNDYVIATGSRDCTIKIWEVPEEGLIKDNLVTPLITLPKQQKRVTGVYFHPSVDSLFMSSTLDYTLDIWDLSSTGEQSSVIQKLTGHEDLIMSVGWNTWSGGDKLATSSRDKKMRLYDPRSQSTPIQTISTHEGAQGFKLCWADSNGLELICTVGANKSAQRQLYLWDPRQLQSSQPLVSKDVTTDSSILSPYYDFGTNMVYLGGKGDGIYYYEIEKNNAHHIGKATFGNVTQSAITLLPKSVVDVNICEIDRFLRLTAANSVEMVSFMCPRKSQLFQEDIFPPCPSGDPTTDCSLWFADKQLKVIPHTISMKPDGVQSIYEVSEEEGGKSKEKDKLEQLSKLSIGNSGSGGGGGDGDGNGGDSPFITEGIVKQEIEGWLFNSYENRYLKIVKDKIYCFLNEDSAQAIWDSPVLNIKYVDIYDEDENTSGEEWSLRFNIILLNGKEHRMECSTVKQRDAWCQSINAYREMKQQVDQSVVSPTMGEFHLVNTTPVAPSPMVISENKNALQKFSVPSPKEQQQQQQQGSESPNSTTPKSSTPTQTRHHSVLSRNPSYTSLKSSGGFSKPSPSSSTSTPPSTFASPLSIAQTSSTTTTTTTTTTTTSSSSTPPPLRANNSTSSTPLNSSTGIKQSDIVIEGNLTELIPGLLWNSNTEKWYVVSEGMLYSYKNKSLKQLDPLETIHLEKAISAHKTKEIFTIQGFSFQLSTPNRIIHLLAKTKEERGSWLSVLRQNLKSSGETKPKSVLTRASTMDELISSPMSDDESNTNEGGVEEEEEEQPLEGQLSRKLPGIFSMWGQCFVALLAEDLFVSRNKLSTTPELRIQLSSISLIKKISPNEFTLYDSMNQVVCNFRTIAPTAEFDDCTRWIDGLEAARKRSIDIIKMFGINEKEVLSPLPSSSSIPSSGSNGNLLDPSADDLTRYLDLTAIKNGKQKILIQVKGKRKIRVRMVKLSTSSLNCHNSFILDAGPRIFVWAGSKTSRVNKAKALDFANRIRTKERGGKSTLIQLDQGRDEQSFDFWEILGGNSSDPIATTPTPEEQDTESIKTTIYRVGLDVKKNSLRARLAWEGTDWKLPNKEILNTKFVYVVDCVTEIFVWVGKESSSIQRKMATKVALVLQAQKDRVDWTKITRLTEFGENNLFKEKFANYPGMLPISTTRQEIKSHVATSKVEHKIETLASRMTTPFIDNEALFTIPIDEGGRVKVWKIEDYEKIDHPQHLYSQFFSSDSYIVLYTYMQNNKEAHVIYYYLGRDSSINEKGTSAYLTVDLNESLVGACVQTRVVANKECKNFLNLFKTKMVIHKGKYNNYDPKKPSLYQVKGLDKIDIRAVQVEFSSSMLNTLHVSILRTPEKIYIWHGKFSLDAEQNSALSIAENFNSTSAPIEILKEGSESNEFWSAFESTGGRQKYFNDIMIQSSSIPTSFTYKPRFFVCSNASGIVEVTEESPFSQDDLDIGSVCILDVQSHIYLWIGSRATHRTKRASMEVVLNFIETSKLGHSKEHTKVLIATPFEEPIGFKSYFRAWCTSKYPKNKLPLVEKDGIPVEQVLKDYLKEIYTYEELLADPLPAGVDSTKLDTYLNDEDFEKVFKMTRTEWLKIPAWKREGIKKELFLF</sequence>
<keyword id="KW-0963">Cytoplasm</keyword>
<keyword id="KW-0206">Cytoskeleton</keyword>
<keyword id="KW-0472">Membrane</keyword>
<keyword id="KW-1185">Reference proteome</keyword>
<keyword id="KW-0677">Repeat</keyword>
<keyword id="KW-0853">WD repeat</keyword>
<dbReference type="EMBL" id="AJ427856">
    <property type="protein sequence ID" value="CAD20809.1"/>
    <property type="molecule type" value="Genomic_DNA"/>
</dbReference>
<dbReference type="EMBL" id="AAFI02000117">
    <property type="protein sequence ID" value="EAL63138.1"/>
    <property type="molecule type" value="Genomic_DNA"/>
</dbReference>
<dbReference type="EMBL" id="U78754">
    <property type="protein sequence ID" value="AAB36957.1"/>
    <property type="molecule type" value="mRNA"/>
</dbReference>
<dbReference type="RefSeq" id="XP_636652.1">
    <property type="nucleotide sequence ID" value="XM_631560.1"/>
</dbReference>
<dbReference type="SMR" id="Q8WQ85"/>
<dbReference type="STRING" id="44689.Q8WQ85"/>
<dbReference type="GlyGen" id="Q8WQ85">
    <property type="glycosylation" value="4 sites"/>
</dbReference>
<dbReference type="PaxDb" id="44689-DDB0191538"/>
<dbReference type="EnsemblProtists" id="EAL63138">
    <property type="protein sequence ID" value="EAL63138"/>
    <property type="gene ID" value="DDB_G0288557"/>
</dbReference>
<dbReference type="GeneID" id="8626698"/>
<dbReference type="KEGG" id="ddi:DDB_G0288557"/>
<dbReference type="dictyBase" id="DDB_G0288557">
    <property type="gene designation" value="vilA"/>
</dbReference>
<dbReference type="VEuPathDB" id="AmoebaDB:DDB_G0288557"/>
<dbReference type="eggNOG" id="KOG0303">
    <property type="taxonomic scope" value="Eukaryota"/>
</dbReference>
<dbReference type="eggNOG" id="KOG0443">
    <property type="taxonomic scope" value="Eukaryota"/>
</dbReference>
<dbReference type="HOGENOM" id="CLU_240788_0_0_1"/>
<dbReference type="InParanoid" id="Q8WQ85"/>
<dbReference type="OMA" id="YPGMLPI"/>
<dbReference type="Reactome" id="R-DDI-6798695">
    <property type="pathway name" value="Neutrophil degranulation"/>
</dbReference>
<dbReference type="PRO" id="PR:Q8WQ85"/>
<dbReference type="Proteomes" id="UP000002195">
    <property type="component" value="Chromosome 5"/>
</dbReference>
<dbReference type="GO" id="GO:0015629">
    <property type="term" value="C:actin cytoskeleton"/>
    <property type="evidence" value="ECO:0000318"/>
    <property type="project" value="GO_Central"/>
</dbReference>
<dbReference type="GO" id="GO:0005737">
    <property type="term" value="C:cytoplasm"/>
    <property type="evidence" value="ECO:0000318"/>
    <property type="project" value="GO_Central"/>
</dbReference>
<dbReference type="GO" id="GO:0005783">
    <property type="term" value="C:endoplasmic reticulum"/>
    <property type="evidence" value="ECO:0000314"/>
    <property type="project" value="dictyBase"/>
</dbReference>
<dbReference type="GO" id="GO:0005794">
    <property type="term" value="C:Golgi apparatus"/>
    <property type="evidence" value="ECO:0000314"/>
    <property type="project" value="dictyBase"/>
</dbReference>
<dbReference type="GO" id="GO:0016020">
    <property type="term" value="C:membrane"/>
    <property type="evidence" value="ECO:0007669"/>
    <property type="project" value="UniProtKB-SubCell"/>
</dbReference>
<dbReference type="GO" id="GO:0051015">
    <property type="term" value="F:actin filament binding"/>
    <property type="evidence" value="ECO:0000318"/>
    <property type="project" value="GO_Central"/>
</dbReference>
<dbReference type="GO" id="GO:0005546">
    <property type="term" value="F:phosphatidylinositol-4,5-bisphosphate binding"/>
    <property type="evidence" value="ECO:0000318"/>
    <property type="project" value="GO_Central"/>
</dbReference>
<dbReference type="GO" id="GO:0051014">
    <property type="term" value="P:actin filament severing"/>
    <property type="evidence" value="ECO:0000318"/>
    <property type="project" value="GO_Central"/>
</dbReference>
<dbReference type="GO" id="GO:0008154">
    <property type="term" value="P:actin polymerization or depolymerization"/>
    <property type="evidence" value="ECO:0000318"/>
    <property type="project" value="GO_Central"/>
</dbReference>
<dbReference type="GO" id="GO:0051016">
    <property type="term" value="P:barbed-end actin filament capping"/>
    <property type="evidence" value="ECO:0000318"/>
    <property type="project" value="GO_Central"/>
</dbReference>
<dbReference type="GO" id="GO:0046956">
    <property type="term" value="P:positive phototaxis"/>
    <property type="evidence" value="ECO:0000315"/>
    <property type="project" value="dictyBase"/>
</dbReference>
<dbReference type="GO" id="GO:0051707">
    <property type="term" value="P:response to other organism"/>
    <property type="evidence" value="ECO:0000304"/>
    <property type="project" value="dictyBase"/>
</dbReference>
<dbReference type="GO" id="GO:0031153">
    <property type="term" value="P:slug development involved in sorocarp development"/>
    <property type="evidence" value="ECO:0000314"/>
    <property type="project" value="dictyBase"/>
</dbReference>
<dbReference type="CDD" id="cd11289">
    <property type="entry name" value="gelsolin_S2_like"/>
    <property type="match status" value="1"/>
</dbReference>
<dbReference type="CDD" id="cd11292">
    <property type="entry name" value="gelsolin_S3_like"/>
    <property type="match status" value="1"/>
</dbReference>
<dbReference type="CDD" id="cd11293">
    <property type="entry name" value="gelsolin_S4_like"/>
    <property type="match status" value="1"/>
</dbReference>
<dbReference type="CDD" id="cd11288">
    <property type="entry name" value="gelsolin_S5_like"/>
    <property type="match status" value="1"/>
</dbReference>
<dbReference type="CDD" id="cd11291">
    <property type="entry name" value="gelsolin_S6_like"/>
    <property type="match status" value="1"/>
</dbReference>
<dbReference type="CDD" id="cd00821">
    <property type="entry name" value="PH"/>
    <property type="match status" value="1"/>
</dbReference>
<dbReference type="FunFam" id="3.40.20.10:FF:000001">
    <property type="entry name" value="Gelsolin"/>
    <property type="match status" value="1"/>
</dbReference>
<dbReference type="FunFam" id="3.40.20.10:FF:000031">
    <property type="entry name" value="protein flightless-1 homolog isoform X1"/>
    <property type="match status" value="1"/>
</dbReference>
<dbReference type="FunFam" id="1.10.950.10:FF:000003">
    <property type="entry name" value="supervillin isoform X2"/>
    <property type="match status" value="1"/>
</dbReference>
<dbReference type="Gene3D" id="2.30.29.30">
    <property type="entry name" value="Pleckstrin-homology domain (PH domain)/Phosphotyrosine-binding domain (PTB)"/>
    <property type="match status" value="1"/>
</dbReference>
<dbReference type="Gene3D" id="3.40.20.10">
    <property type="entry name" value="Severin"/>
    <property type="match status" value="5"/>
</dbReference>
<dbReference type="Gene3D" id="1.10.950.10">
    <property type="entry name" value="Villin headpiece domain"/>
    <property type="match status" value="1"/>
</dbReference>
<dbReference type="Gene3D" id="2.130.10.10">
    <property type="entry name" value="YVTN repeat-like/Quinoprotein amine dehydrogenase"/>
    <property type="match status" value="1"/>
</dbReference>
<dbReference type="InterPro" id="IPR029006">
    <property type="entry name" value="ADF-H/Gelsolin-like_dom_sf"/>
</dbReference>
<dbReference type="InterPro" id="IPR015048">
    <property type="entry name" value="DUF1899"/>
</dbReference>
<dbReference type="InterPro" id="IPR007123">
    <property type="entry name" value="Gelsolin-like_dom"/>
</dbReference>
<dbReference type="InterPro" id="IPR011993">
    <property type="entry name" value="PH-like_dom_sf"/>
</dbReference>
<dbReference type="InterPro" id="IPR001849">
    <property type="entry name" value="PH_domain"/>
</dbReference>
<dbReference type="InterPro" id="IPR007122">
    <property type="entry name" value="Villin/Gelsolin"/>
</dbReference>
<dbReference type="InterPro" id="IPR003128">
    <property type="entry name" value="Villin_headpiece"/>
</dbReference>
<dbReference type="InterPro" id="IPR036886">
    <property type="entry name" value="Villin_headpiece_dom_sf"/>
</dbReference>
<dbReference type="InterPro" id="IPR015943">
    <property type="entry name" value="WD40/YVTN_repeat-like_dom_sf"/>
</dbReference>
<dbReference type="InterPro" id="IPR019775">
    <property type="entry name" value="WD40_repeat_CS"/>
</dbReference>
<dbReference type="InterPro" id="IPR036322">
    <property type="entry name" value="WD40_repeat_dom_sf"/>
</dbReference>
<dbReference type="InterPro" id="IPR001680">
    <property type="entry name" value="WD40_rpt"/>
</dbReference>
<dbReference type="PANTHER" id="PTHR11977:SF125">
    <property type="entry name" value="VILLIDIN"/>
    <property type="match status" value="1"/>
</dbReference>
<dbReference type="PANTHER" id="PTHR11977">
    <property type="entry name" value="VILLIN"/>
    <property type="match status" value="1"/>
</dbReference>
<dbReference type="Pfam" id="PF08953">
    <property type="entry name" value="DUF1899"/>
    <property type="match status" value="1"/>
</dbReference>
<dbReference type="Pfam" id="PF00626">
    <property type="entry name" value="Gelsolin"/>
    <property type="match status" value="5"/>
</dbReference>
<dbReference type="Pfam" id="PF00169">
    <property type="entry name" value="PH"/>
    <property type="match status" value="1"/>
</dbReference>
<dbReference type="Pfam" id="PF02209">
    <property type="entry name" value="VHP"/>
    <property type="match status" value="1"/>
</dbReference>
<dbReference type="Pfam" id="PF00400">
    <property type="entry name" value="WD40"/>
    <property type="match status" value="2"/>
</dbReference>
<dbReference type="Pfam" id="PF16300">
    <property type="entry name" value="WD40_4"/>
    <property type="match status" value="1"/>
</dbReference>
<dbReference type="PRINTS" id="PR00597">
    <property type="entry name" value="GELSOLIN"/>
</dbReference>
<dbReference type="SMART" id="SM01166">
    <property type="entry name" value="DUF1899"/>
    <property type="match status" value="1"/>
</dbReference>
<dbReference type="SMART" id="SM01167">
    <property type="entry name" value="DUF1900"/>
    <property type="match status" value="1"/>
</dbReference>
<dbReference type="SMART" id="SM00262">
    <property type="entry name" value="GEL"/>
    <property type="match status" value="5"/>
</dbReference>
<dbReference type="SMART" id="SM00233">
    <property type="entry name" value="PH"/>
    <property type="match status" value="3"/>
</dbReference>
<dbReference type="SMART" id="SM00153">
    <property type="entry name" value="VHP"/>
    <property type="match status" value="1"/>
</dbReference>
<dbReference type="SMART" id="SM00320">
    <property type="entry name" value="WD40"/>
    <property type="match status" value="4"/>
</dbReference>
<dbReference type="SUPFAM" id="SSF55753">
    <property type="entry name" value="Actin depolymerizing proteins"/>
    <property type="match status" value="5"/>
</dbReference>
<dbReference type="SUPFAM" id="SSF50729">
    <property type="entry name" value="PH domain-like"/>
    <property type="match status" value="2"/>
</dbReference>
<dbReference type="SUPFAM" id="SSF47050">
    <property type="entry name" value="VHP, Villin headpiece domain"/>
    <property type="match status" value="1"/>
</dbReference>
<dbReference type="SUPFAM" id="SSF50978">
    <property type="entry name" value="WD40 repeat-like"/>
    <property type="match status" value="1"/>
</dbReference>
<dbReference type="PROSITE" id="PS51089">
    <property type="entry name" value="HP"/>
    <property type="match status" value="1"/>
</dbReference>
<dbReference type="PROSITE" id="PS50003">
    <property type="entry name" value="PH_DOMAIN"/>
    <property type="match status" value="2"/>
</dbReference>
<dbReference type="PROSITE" id="PS00678">
    <property type="entry name" value="WD_REPEATS_1"/>
    <property type="match status" value="1"/>
</dbReference>
<dbReference type="PROSITE" id="PS50082">
    <property type="entry name" value="WD_REPEATS_2"/>
    <property type="match status" value="3"/>
</dbReference>
<dbReference type="PROSITE" id="PS50294">
    <property type="entry name" value="WD_REPEATS_REGION"/>
    <property type="match status" value="1"/>
</dbReference>
<proteinExistence type="evidence at protein level"/>
<evidence type="ECO:0000255" key="1">
    <source>
        <dbReference type="PROSITE-ProRule" id="PRU00145"/>
    </source>
</evidence>
<evidence type="ECO:0000255" key="2">
    <source>
        <dbReference type="PROSITE-ProRule" id="PRU00595"/>
    </source>
</evidence>
<evidence type="ECO:0000256" key="3">
    <source>
        <dbReference type="SAM" id="MobiDB-lite"/>
    </source>
</evidence>
<evidence type="ECO:0000269" key="4">
    <source>
    </source>
</evidence>
<evidence type="ECO:0000305" key="5"/>
<protein>
    <recommendedName>
        <fullName>Villidin</fullName>
    </recommendedName>
</protein>
<organism>
    <name type="scientific">Dictyostelium discoideum</name>
    <name type="common">Social amoeba</name>
    <dbReference type="NCBI Taxonomy" id="44689"/>
    <lineage>
        <taxon>Eukaryota</taxon>
        <taxon>Amoebozoa</taxon>
        <taxon>Evosea</taxon>
        <taxon>Eumycetozoa</taxon>
        <taxon>Dictyostelia</taxon>
        <taxon>Dictyosteliales</taxon>
        <taxon>Dictyosteliaceae</taxon>
        <taxon>Dictyostelium</taxon>
    </lineage>
</organism>
<accession>Q8WQ85</accession>
<accession>P90524</accession>
<accession>Q54IR2</accession>